<proteinExistence type="inferred from homology"/>
<keyword id="KW-0066">ATP synthesis</keyword>
<keyword id="KW-0067">ATP-binding</keyword>
<keyword id="KW-0997">Cell inner membrane</keyword>
<keyword id="KW-1003">Cell membrane</keyword>
<keyword id="KW-0139">CF(1)</keyword>
<keyword id="KW-0375">Hydrogen ion transport</keyword>
<keyword id="KW-0406">Ion transport</keyword>
<keyword id="KW-0472">Membrane</keyword>
<keyword id="KW-0547">Nucleotide-binding</keyword>
<keyword id="KW-1278">Translocase</keyword>
<keyword id="KW-0813">Transport</keyword>
<sequence length="526" mass="57027">MSTTVRPDEVSSILRKQLAGFESEAEVYDVGTVLQVGDGIARVYGLSLVAAGELLEFPNKVMGMALNLEEDNVGCVLFGESNTVKEGDTVRRTNILASVPVGEAMLGRVVTPLGEPIDGKGSIETEIRVPLERRAPGVIFRKSVHEPLQTGLKAIDSMIPIGRGQRELIIGDRQTGKTAVAIDTIINQKGKGVFCIYVAIGLKGSTVAQVVNTLEKYGAMEYTTVISATASDPAPLQFIAPFAGAALGEYFRDTGRHALVVYDDLSKQAVAYRQLSLLLRRPPGREAYPGDVFYLHSRLLERAAKITDDIEVARKMNDLPDALKPLVKGGGSLTALPVIETQAGDVSAYIPTNVISITDGQIFLESNLFNSGQRPAINVGISVSRVGGAAQIKAMKKVAGTLRLDLAQFRELEAFSKFGSDLDKTTKAQLDRGARLVEILKQGQYIPMPVEKQVAIIFLGTQGLLDAVEVPHIRRFEEEFLSMLEHKHPEILKTIAEKGTLEADTAKQLKEAAERFVSSFNQKVKA</sequence>
<organism>
    <name type="scientific">Chlorobium limicola (strain DSM 245 / NBRC 103803 / 6330)</name>
    <dbReference type="NCBI Taxonomy" id="290315"/>
    <lineage>
        <taxon>Bacteria</taxon>
        <taxon>Pseudomonadati</taxon>
        <taxon>Chlorobiota</taxon>
        <taxon>Chlorobiia</taxon>
        <taxon>Chlorobiales</taxon>
        <taxon>Chlorobiaceae</taxon>
        <taxon>Chlorobium/Pelodictyon group</taxon>
        <taxon>Chlorobium</taxon>
    </lineage>
</organism>
<reference key="1">
    <citation type="submission" date="2008-05" db="EMBL/GenBank/DDBJ databases">
        <title>Complete sequence of Chlorobium limicola DSM 245.</title>
        <authorList>
            <consortium name="US DOE Joint Genome Institute"/>
            <person name="Lucas S."/>
            <person name="Copeland A."/>
            <person name="Lapidus A."/>
            <person name="Glavina del Rio T."/>
            <person name="Dalin E."/>
            <person name="Tice H."/>
            <person name="Bruce D."/>
            <person name="Goodwin L."/>
            <person name="Pitluck S."/>
            <person name="Schmutz J."/>
            <person name="Larimer F."/>
            <person name="Land M."/>
            <person name="Hauser L."/>
            <person name="Kyrpides N."/>
            <person name="Ovchinnikova G."/>
            <person name="Zhao F."/>
            <person name="Li T."/>
            <person name="Liu Z."/>
            <person name="Overmann J."/>
            <person name="Bryant D.A."/>
            <person name="Richardson P."/>
        </authorList>
    </citation>
    <scope>NUCLEOTIDE SEQUENCE [LARGE SCALE GENOMIC DNA]</scope>
    <source>
        <strain>DSM 245 / NBRC 103803 / 6330</strain>
    </source>
</reference>
<accession>B3EHU6</accession>
<gene>
    <name evidence="1" type="primary">atpA</name>
    <name type="ordered locus">Clim_2332</name>
</gene>
<dbReference type="EC" id="7.1.2.2" evidence="1"/>
<dbReference type="EMBL" id="CP001097">
    <property type="protein sequence ID" value="ACD91355.1"/>
    <property type="molecule type" value="Genomic_DNA"/>
</dbReference>
<dbReference type="RefSeq" id="WP_012467220.1">
    <property type="nucleotide sequence ID" value="NC_010803.1"/>
</dbReference>
<dbReference type="SMR" id="B3EHU6"/>
<dbReference type="STRING" id="290315.Clim_2332"/>
<dbReference type="KEGG" id="cli:Clim_2332"/>
<dbReference type="eggNOG" id="COG0056">
    <property type="taxonomic scope" value="Bacteria"/>
</dbReference>
<dbReference type="HOGENOM" id="CLU_010091_2_1_10"/>
<dbReference type="OrthoDB" id="9803053at2"/>
<dbReference type="Proteomes" id="UP000008841">
    <property type="component" value="Chromosome"/>
</dbReference>
<dbReference type="GO" id="GO:0005886">
    <property type="term" value="C:plasma membrane"/>
    <property type="evidence" value="ECO:0007669"/>
    <property type="project" value="UniProtKB-SubCell"/>
</dbReference>
<dbReference type="GO" id="GO:0045259">
    <property type="term" value="C:proton-transporting ATP synthase complex"/>
    <property type="evidence" value="ECO:0007669"/>
    <property type="project" value="UniProtKB-KW"/>
</dbReference>
<dbReference type="GO" id="GO:0043531">
    <property type="term" value="F:ADP binding"/>
    <property type="evidence" value="ECO:0007669"/>
    <property type="project" value="TreeGrafter"/>
</dbReference>
<dbReference type="GO" id="GO:0005524">
    <property type="term" value="F:ATP binding"/>
    <property type="evidence" value="ECO:0007669"/>
    <property type="project" value="UniProtKB-UniRule"/>
</dbReference>
<dbReference type="GO" id="GO:0046933">
    <property type="term" value="F:proton-transporting ATP synthase activity, rotational mechanism"/>
    <property type="evidence" value="ECO:0007669"/>
    <property type="project" value="UniProtKB-UniRule"/>
</dbReference>
<dbReference type="CDD" id="cd18113">
    <property type="entry name" value="ATP-synt_F1_alpha_C"/>
    <property type="match status" value="1"/>
</dbReference>
<dbReference type="CDD" id="cd18116">
    <property type="entry name" value="ATP-synt_F1_alpha_N"/>
    <property type="match status" value="1"/>
</dbReference>
<dbReference type="CDD" id="cd01132">
    <property type="entry name" value="F1-ATPase_alpha_CD"/>
    <property type="match status" value="1"/>
</dbReference>
<dbReference type="FunFam" id="1.20.150.20:FF:000001">
    <property type="entry name" value="ATP synthase subunit alpha"/>
    <property type="match status" value="1"/>
</dbReference>
<dbReference type="FunFam" id="2.40.30.20:FF:000001">
    <property type="entry name" value="ATP synthase subunit alpha"/>
    <property type="match status" value="1"/>
</dbReference>
<dbReference type="FunFam" id="3.40.50.300:FF:000002">
    <property type="entry name" value="ATP synthase subunit alpha"/>
    <property type="match status" value="1"/>
</dbReference>
<dbReference type="Gene3D" id="2.40.30.20">
    <property type="match status" value="1"/>
</dbReference>
<dbReference type="Gene3D" id="1.20.150.20">
    <property type="entry name" value="ATP synthase alpha/beta chain, C-terminal domain"/>
    <property type="match status" value="1"/>
</dbReference>
<dbReference type="Gene3D" id="3.40.50.300">
    <property type="entry name" value="P-loop containing nucleotide triphosphate hydrolases"/>
    <property type="match status" value="1"/>
</dbReference>
<dbReference type="HAMAP" id="MF_01346">
    <property type="entry name" value="ATP_synth_alpha_bact"/>
    <property type="match status" value="1"/>
</dbReference>
<dbReference type="InterPro" id="IPR023366">
    <property type="entry name" value="ATP_synth_asu-like_sf"/>
</dbReference>
<dbReference type="InterPro" id="IPR000793">
    <property type="entry name" value="ATP_synth_asu_C"/>
</dbReference>
<dbReference type="InterPro" id="IPR038376">
    <property type="entry name" value="ATP_synth_asu_C_sf"/>
</dbReference>
<dbReference type="InterPro" id="IPR033732">
    <property type="entry name" value="ATP_synth_F1_a_nt-bd_dom"/>
</dbReference>
<dbReference type="InterPro" id="IPR005294">
    <property type="entry name" value="ATP_synth_F1_asu"/>
</dbReference>
<dbReference type="InterPro" id="IPR020003">
    <property type="entry name" value="ATPase_a/bsu_AS"/>
</dbReference>
<dbReference type="InterPro" id="IPR004100">
    <property type="entry name" value="ATPase_F1/V1/A1_a/bsu_N"/>
</dbReference>
<dbReference type="InterPro" id="IPR036121">
    <property type="entry name" value="ATPase_F1/V1/A1_a/bsu_N_sf"/>
</dbReference>
<dbReference type="InterPro" id="IPR000194">
    <property type="entry name" value="ATPase_F1/V1/A1_a/bsu_nucl-bd"/>
</dbReference>
<dbReference type="InterPro" id="IPR027417">
    <property type="entry name" value="P-loop_NTPase"/>
</dbReference>
<dbReference type="NCBIfam" id="TIGR00962">
    <property type="entry name" value="atpA"/>
    <property type="match status" value="1"/>
</dbReference>
<dbReference type="NCBIfam" id="NF009884">
    <property type="entry name" value="PRK13343.1"/>
    <property type="match status" value="1"/>
</dbReference>
<dbReference type="PANTHER" id="PTHR48082">
    <property type="entry name" value="ATP SYNTHASE SUBUNIT ALPHA, MITOCHONDRIAL"/>
    <property type="match status" value="1"/>
</dbReference>
<dbReference type="PANTHER" id="PTHR48082:SF2">
    <property type="entry name" value="ATP SYNTHASE SUBUNIT ALPHA, MITOCHONDRIAL"/>
    <property type="match status" value="1"/>
</dbReference>
<dbReference type="Pfam" id="PF00006">
    <property type="entry name" value="ATP-synt_ab"/>
    <property type="match status" value="1"/>
</dbReference>
<dbReference type="Pfam" id="PF00306">
    <property type="entry name" value="ATP-synt_ab_C"/>
    <property type="match status" value="1"/>
</dbReference>
<dbReference type="Pfam" id="PF02874">
    <property type="entry name" value="ATP-synt_ab_N"/>
    <property type="match status" value="1"/>
</dbReference>
<dbReference type="PIRSF" id="PIRSF039088">
    <property type="entry name" value="F_ATPase_subunit_alpha"/>
    <property type="match status" value="1"/>
</dbReference>
<dbReference type="SUPFAM" id="SSF47917">
    <property type="entry name" value="C-terminal domain of alpha and beta subunits of F1 ATP synthase"/>
    <property type="match status" value="1"/>
</dbReference>
<dbReference type="SUPFAM" id="SSF50615">
    <property type="entry name" value="N-terminal domain of alpha and beta subunits of F1 ATP synthase"/>
    <property type="match status" value="1"/>
</dbReference>
<dbReference type="SUPFAM" id="SSF52540">
    <property type="entry name" value="P-loop containing nucleoside triphosphate hydrolases"/>
    <property type="match status" value="1"/>
</dbReference>
<dbReference type="PROSITE" id="PS00152">
    <property type="entry name" value="ATPASE_ALPHA_BETA"/>
    <property type="match status" value="1"/>
</dbReference>
<comment type="function">
    <text evidence="1">Produces ATP from ADP in the presence of a proton gradient across the membrane. The alpha chain is a regulatory subunit.</text>
</comment>
<comment type="catalytic activity">
    <reaction evidence="1">
        <text>ATP + H2O + 4 H(+)(in) = ADP + phosphate + 5 H(+)(out)</text>
        <dbReference type="Rhea" id="RHEA:57720"/>
        <dbReference type="ChEBI" id="CHEBI:15377"/>
        <dbReference type="ChEBI" id="CHEBI:15378"/>
        <dbReference type="ChEBI" id="CHEBI:30616"/>
        <dbReference type="ChEBI" id="CHEBI:43474"/>
        <dbReference type="ChEBI" id="CHEBI:456216"/>
        <dbReference type="EC" id="7.1.2.2"/>
    </reaction>
</comment>
<comment type="subunit">
    <text evidence="1">F-type ATPases have 2 components, CF(1) - the catalytic core - and CF(0) - the membrane proton channel. CF(1) has five subunits: alpha(3), beta(3), gamma(1), delta(1), epsilon(1). CF(0) has four main subunits: a, b, b' and c.</text>
</comment>
<comment type="subcellular location">
    <subcellularLocation>
        <location evidence="1">Cell inner membrane</location>
        <topology evidence="1">Peripheral membrane protein</topology>
    </subcellularLocation>
</comment>
<comment type="similarity">
    <text evidence="1">Belongs to the ATPase alpha/beta chains family.</text>
</comment>
<protein>
    <recommendedName>
        <fullName evidence="1">ATP synthase subunit alpha</fullName>
        <ecNumber evidence="1">7.1.2.2</ecNumber>
    </recommendedName>
    <alternativeName>
        <fullName evidence="1">ATP synthase F1 sector subunit alpha</fullName>
    </alternativeName>
    <alternativeName>
        <fullName evidence="1">F-ATPase subunit alpha</fullName>
    </alternativeName>
</protein>
<name>ATPA_CHLL2</name>
<evidence type="ECO:0000255" key="1">
    <source>
        <dbReference type="HAMAP-Rule" id="MF_01346"/>
    </source>
</evidence>
<feature type="chain" id="PRO_1000143353" description="ATP synthase subunit alpha">
    <location>
        <begin position="1"/>
        <end position="526"/>
    </location>
</feature>
<feature type="binding site" evidence="1">
    <location>
        <begin position="171"/>
        <end position="178"/>
    </location>
    <ligand>
        <name>ATP</name>
        <dbReference type="ChEBI" id="CHEBI:30616"/>
    </ligand>
</feature>
<feature type="site" description="Required for activity" evidence="1">
    <location>
        <position position="382"/>
    </location>
</feature>